<name>STX3_HUMAN</name>
<proteinExistence type="evidence at protein level"/>
<accession>Q13277</accession>
<accession>B4DME0</accession>
<accession>O43750</accession>
<accession>O43751</accession>
<accession>Q15360</accession>
<sequence length="289" mass="33155">MKDRLEQLKAKQLTQDDDTDAVEIAIDNTAFMDEFFSEIEETRLNIDKISEHVEEAKKLYSIILSAPIPEPKTKDDLEQLTTEIKKRANNVRNKLKSMEKHIEEDEVRSSADLRIRKSQHSVLSRKFVEVMTKYNEAQVDFRERSKGRIQRQLEITGKKTTDEELEEMLESGNPAIFTSGIIDSQISKQALSEIEGRHKDIVRLESSIKELHDMFMDIAMLVENQGEMLDNIELNVMHTVDHVEKARDETKKAVKYQSQARKKLIIIIVLVVVLLGILALIIGLSVGLN</sequence>
<keyword id="KW-0025">Alternative splicing</keyword>
<keyword id="KW-1003">Cell membrane</keyword>
<keyword id="KW-0175">Coiled coil</keyword>
<keyword id="KW-0225">Disease variant</keyword>
<keyword id="KW-0472">Membrane</keyword>
<keyword id="KW-0532">Neurotransmitter transport</keyword>
<keyword id="KW-0539">Nucleus</keyword>
<keyword id="KW-1267">Proteomics identification</keyword>
<keyword id="KW-1185">Reference proteome</keyword>
<keyword id="KW-0812">Transmembrane</keyword>
<keyword id="KW-1133">Transmembrane helix</keyword>
<keyword id="KW-0813">Transport</keyword>
<comment type="function">
    <text evidence="4">Potentially involved in docking of synaptic vesicles at presynaptic active zones. Apical receptor involved in membrane fusion of apical vesicles.</text>
</comment>
<comment type="function">
    <molecule>Isoform B</molecule>
    <text evidence="8">Essential for survival of retinal photoreceetors.</text>
</comment>
<comment type="function">
    <molecule>Isoform 3</molecule>
    <text evidence="7">Functions as a regulator of gene expression.</text>
</comment>
<comment type="subunit">
    <text evidence="1">Interacts with REEP6 (By similarity). Interacts with PRPH2 in rod and cone photoreceptors (By similarity). Interacts with ROM1 (By similarity). Interacts with SNAP25 (By similarity). Interacts with VAMP2 (By similarity).</text>
</comment>
<comment type="subunit">
    <molecule>Isoform 3</molecule>
    <text evidence="7">Interacts with IPO5.</text>
</comment>
<comment type="interaction">
    <interactant intactId="EBI-1394295">
        <id>Q13277</id>
    </interactant>
    <interactant intactId="EBI-13059134">
        <id>Q13520</id>
        <label>AQP6</label>
    </interactant>
    <organismsDiffer>false</organismsDiffer>
    <experiments>3</experiments>
</comment>
<comment type="interaction">
    <interactant intactId="EBI-1394295">
        <id>Q13277</id>
    </interactant>
    <interactant intactId="EBI-7797864">
        <id>P11912</id>
        <label>CD79A</label>
    </interactant>
    <organismsDiffer>false</organismsDiffer>
    <experiments>3</experiments>
</comment>
<comment type="interaction">
    <interactant intactId="EBI-1394295">
        <id>Q13277</id>
    </interactant>
    <interactant intactId="EBI-724524">
        <id>O75208</id>
        <label>COQ9</label>
    </interactant>
    <organismsDiffer>false</organismsDiffer>
    <experiments>3</experiments>
</comment>
<comment type="interaction">
    <interactant intactId="EBI-1394295">
        <id>Q13277</id>
    </interactant>
    <interactant intactId="EBI-18013275">
        <id>Q7Z7G2</id>
        <label>CPLX4</label>
    </interactant>
    <organismsDiffer>false</organismsDiffer>
    <experiments>3</experiments>
</comment>
<comment type="interaction">
    <interactant intactId="EBI-1394295">
        <id>Q13277</id>
    </interactant>
    <interactant intactId="EBI-6942903">
        <id>Q96BA8</id>
        <label>CREB3L1</label>
    </interactant>
    <organismsDiffer>false</organismsDiffer>
    <experiments>3</experiments>
</comment>
<comment type="interaction">
    <interactant intactId="EBI-1394295">
        <id>Q13277</id>
    </interactant>
    <interactant intactId="EBI-8646596">
        <id>P49447</id>
        <label>CYB561</label>
    </interactant>
    <organismsDiffer>false</organismsDiffer>
    <experiments>3</experiments>
</comment>
<comment type="interaction">
    <interactant intactId="EBI-1394295">
        <id>Q13277</id>
    </interactant>
    <interactant intactId="EBI-8787095">
        <id>O00559</id>
        <label>EBAG9</label>
    </interactant>
    <organismsDiffer>false</organismsDiffer>
    <experiments>3</experiments>
</comment>
<comment type="interaction">
    <interactant intactId="EBI-1394295">
        <id>Q13277</id>
    </interactant>
    <interactant intactId="EBI-18535450">
        <id>Q9GZR5</id>
        <label>ELOVL4</label>
    </interactant>
    <organismsDiffer>false</organismsDiffer>
    <experiments>3</experiments>
</comment>
<comment type="interaction">
    <interactant intactId="EBI-1394295">
        <id>Q13277</id>
    </interactant>
    <interactant intactId="EBI-781551">
        <id>Q9Y282</id>
        <label>ERGIC3</label>
    </interactant>
    <organismsDiffer>false</organismsDiffer>
    <experiments>3</experiments>
</comment>
<comment type="interaction">
    <interactant intactId="EBI-1394295">
        <id>Q13277</id>
    </interactant>
    <interactant intactId="EBI-18304435">
        <id>Q5JX71</id>
        <label>FAM209A</label>
    </interactant>
    <organismsDiffer>false</organismsDiffer>
    <experiments>3</experiments>
</comment>
<comment type="interaction">
    <interactant intactId="EBI-1394295">
        <id>Q13277</id>
    </interactant>
    <interactant intactId="EBI-12175685">
        <id>Q14802-3</id>
        <label>FXYD3</label>
    </interactant>
    <organismsDiffer>false</organismsDiffer>
    <experiments>3</experiments>
</comment>
<comment type="interaction">
    <interactant intactId="EBI-1394295">
        <id>Q13277</id>
    </interactant>
    <interactant intactId="EBI-13345167">
        <id>Q8TDT2</id>
        <label>GPR152</label>
    </interactant>
    <organismsDiffer>false</organismsDiffer>
    <experiments>3</experiments>
</comment>
<comment type="interaction">
    <interactant intactId="EBI-1394295">
        <id>Q13277</id>
    </interactant>
    <interactant intactId="EBI-11721746">
        <id>Q8TED1</id>
        <label>GPX8</label>
    </interactant>
    <organismsDiffer>false</organismsDiffer>
    <experiments>3</experiments>
</comment>
<comment type="interaction">
    <interactant intactId="EBI-1394295">
        <id>Q13277</id>
    </interactant>
    <interactant intactId="EBI-10266796">
        <id>Q8N5M9</id>
        <label>JAGN1</label>
    </interactant>
    <organismsDiffer>false</organismsDiffer>
    <experiments>3</experiments>
</comment>
<comment type="interaction">
    <interactant intactId="EBI-1394295">
        <id>Q13277</id>
    </interactant>
    <interactant intactId="EBI-3867271">
        <id>Q9NQG1</id>
        <label>MANBAL</label>
    </interactant>
    <organismsDiffer>false</organismsDiffer>
    <experiments>3</experiments>
</comment>
<comment type="interaction">
    <interactant intactId="EBI-1394295">
        <id>Q13277</id>
    </interactant>
    <interactant intactId="EBI-373355">
        <id>Q5SR56</id>
        <label>MFSD14B</label>
    </interactant>
    <organismsDiffer>false</organismsDiffer>
    <experiments>3</experiments>
</comment>
<comment type="interaction">
    <interactant intactId="EBI-1394295">
        <id>Q13277</id>
    </interactant>
    <interactant intactId="EBI-724754">
        <id>O14880</id>
        <label>MGST3</label>
    </interactant>
    <organismsDiffer>false</organismsDiffer>
    <experiments>3</experiments>
</comment>
<comment type="interaction">
    <interactant intactId="EBI-1394295">
        <id>Q13277</id>
    </interactant>
    <interactant intactId="EBI-6163737">
        <id>Q8N4V1</id>
        <label>MMGT1</label>
    </interactant>
    <organismsDiffer>false</organismsDiffer>
    <experiments>3</experiments>
</comment>
<comment type="interaction">
    <interactant intactId="EBI-1394295">
        <id>Q13277</id>
    </interactant>
    <interactant intactId="EBI-949102">
        <id>Q15800</id>
        <label>MSMO1</label>
    </interactant>
    <organismsDiffer>false</organismsDiffer>
    <experiments>3</experiments>
</comment>
<comment type="interaction">
    <interactant intactId="EBI-1394295">
        <id>Q13277</id>
    </interactant>
    <interactant intactId="EBI-3923617">
        <id>Q9H2K0</id>
        <label>MTIF3</label>
    </interactant>
    <organismsDiffer>false</organismsDiffer>
    <experiments>3</experiments>
</comment>
<comment type="interaction">
    <interactant intactId="EBI-1394295">
        <id>Q13277</id>
    </interactant>
    <interactant intactId="EBI-3921185">
        <id>Q9H115</id>
        <label>NAPB</label>
    </interactant>
    <organismsDiffer>false</organismsDiffer>
    <experiments>8</experiments>
</comment>
<comment type="interaction">
    <interactant intactId="EBI-1394295">
        <id>Q13277</id>
    </interactant>
    <interactant intactId="EBI-1050125">
        <id>O15173</id>
        <label>PGRMC2</label>
    </interactant>
    <organismsDiffer>false</organismsDiffer>
    <experiments>3</experiments>
</comment>
<comment type="interaction">
    <interactant intactId="EBI-1394295">
        <id>Q13277</id>
    </interactant>
    <interactant intactId="EBI-7545592">
        <id>Q9H6H4</id>
        <label>REEP4</label>
    </interactant>
    <organismsDiffer>false</organismsDiffer>
    <experiments>3</experiments>
</comment>
<comment type="interaction">
    <interactant intactId="EBI-1394295">
        <id>Q13277</id>
    </interactant>
    <interactant intactId="EBI-1056589">
        <id>Q96TC7</id>
        <label>RMDN3</label>
    </interactant>
    <organismsDiffer>false</organismsDiffer>
    <experiments>3</experiments>
</comment>
<comment type="interaction">
    <interactant intactId="EBI-1394295">
        <id>Q13277</id>
    </interactant>
    <interactant intactId="EBI-17247926">
        <id>Q9NY72</id>
        <label>SCN3B</label>
    </interactant>
    <organismsDiffer>false</organismsDiffer>
    <experiments>3</experiments>
</comment>
<comment type="interaction">
    <interactant intactId="EBI-1394295">
        <id>Q13277</id>
    </interactant>
    <interactant intactId="EBI-17295964">
        <id>Q9NQQ7-3</id>
        <label>SLC35C2</label>
    </interactant>
    <organismsDiffer>false</organismsDiffer>
    <experiments>3</experiments>
</comment>
<comment type="interaction">
    <interactant intactId="EBI-1394295">
        <id>Q13277</id>
    </interactant>
    <interactant intactId="EBI-490676">
        <id>O95721</id>
        <label>SNAP29</label>
    </interactant>
    <organismsDiffer>false</organismsDiffer>
    <experiments>4</experiments>
</comment>
<comment type="interaction">
    <interactant intactId="EBI-1394295">
        <id>Q13277</id>
    </interactant>
    <interactant intactId="EBI-712466">
        <id>Q16623</id>
        <label>STX1A</label>
    </interactant>
    <organismsDiffer>false</organismsDiffer>
    <experiments>3</experiments>
</comment>
<comment type="interaction">
    <interactant intactId="EBI-1394295">
        <id>Q13277</id>
    </interactant>
    <interactant intactId="EBI-11956649">
        <id>P32856-2</id>
        <label>STX2</label>
    </interactant>
    <organismsDiffer>false</organismsDiffer>
    <experiments>3</experiments>
</comment>
<comment type="interaction">
    <interactant intactId="EBI-1394295">
        <id>Q13277</id>
    </interactant>
    <interactant intactId="EBI-744942">
        <id>Q12846</id>
        <label>STX4</label>
    </interactant>
    <organismsDiffer>false</organismsDiffer>
    <experiments>8</experiments>
</comment>
<comment type="interaction">
    <interactant intactId="EBI-1394295">
        <id>Q13277</id>
    </interactant>
    <interactant intactId="EBI-714206">
        <id>Q13190</id>
        <label>STX5</label>
    </interactant>
    <organismsDiffer>false</organismsDiffer>
    <experiments>5</experiments>
</comment>
<comment type="interaction">
    <interactant intactId="EBI-1394295">
        <id>Q13277</id>
    </interactant>
    <interactant intactId="EBI-8638294">
        <id>Q9NUH8</id>
        <label>TMEM14B</label>
    </interactant>
    <organismsDiffer>false</organismsDiffer>
    <experiments>3</experiments>
</comment>
<comment type="interaction">
    <interactant intactId="EBI-1394295">
        <id>Q13277</id>
    </interactant>
    <interactant intactId="EBI-11724433">
        <id>Q6ZT21</id>
        <label>TMPPE</label>
    </interactant>
    <organismsDiffer>false</organismsDiffer>
    <experiments>3</experiments>
</comment>
<comment type="interaction">
    <interactant intactId="EBI-1394295">
        <id>Q13277</id>
    </interactant>
    <interactant intactId="EBI-6447886">
        <id>Q9Y320</id>
        <label>TMX2</label>
    </interactant>
    <organismsDiffer>false</organismsDiffer>
    <experiments>3</experiments>
</comment>
<comment type="interaction">
    <interactant intactId="EBI-1394295">
        <id>Q13277</id>
    </interactant>
    <interactant intactId="EBI-12837904">
        <id>Q96MV8</id>
        <label>ZDHHC15</label>
    </interactant>
    <organismsDiffer>false</organismsDiffer>
    <experiments>3</experiments>
</comment>
<comment type="interaction">
    <interactant intactId="EBI-1394295">
        <id>Q13277</id>
    </interactant>
    <interactant intactId="EBI-296817">
        <id>O95405</id>
        <label>ZFYVE9</label>
    </interactant>
    <organismsDiffer>false</organismsDiffer>
    <experiments>3</experiments>
</comment>
<comment type="subcellular location">
    <molecule>Isoform A</molecule>
    <subcellularLocation>
        <location evidence="4">Apical cell membrane</location>
        <topology evidence="12">Single-pass type IV membrane protein</topology>
    </subcellularLocation>
    <text evidence="1">Localized to the inner and outer plexiform layers, the cell body and the inner segments of photoreceptors.</text>
</comment>
<comment type="subcellular location">
    <molecule>Isoform 3</molecule>
    <subcellularLocation>
        <location evidence="7">Nucleus</location>
    </subcellularLocation>
</comment>
<comment type="alternative products">
    <event type="alternative splicing"/>
    <isoform>
        <id>Q13277-1</id>
        <name>A</name>
        <sequence type="displayed"/>
    </isoform>
    <isoform>
        <id>Q13277-2</id>
        <name>B</name>
        <sequence type="described" ref="VSP_006340"/>
    </isoform>
    <isoform>
        <id>Q13277-3</id>
        <name>3</name>
        <name evidence="11">S</name>
        <name evidence="11">Non-membrane-anchored form</name>
        <sequence type="described" ref="VSP_043187"/>
    </isoform>
</comment>
<comment type="tissue specificity">
    <molecule>Isoform A</molecule>
    <text evidence="4 8">Expressed in small intestine, kidney, pancreas, placenta as well as in retina. Weaker expression in lung, liver and heart. Not expressed in brain and skeletal muscle.</text>
</comment>
<comment type="tissue specificity">
    <molecule>Isoform B</molecule>
    <text evidence="8">Expressed only in the retina.</text>
</comment>
<comment type="tissue specificity">
    <molecule>Isoform 3</molecule>
    <text evidence="7">Ubiquitously expressed.</text>
</comment>
<comment type="disease" evidence="4 6 8">
    <disease id="DI-06172">
        <name>Retinal dystrophy and microvillus inclusion disease</name>
        <acronym>RDMVID</acronym>
        <description>An autosomal recessive disease characterized by early-onset, severe retinal dystrophy associated with intractable congenital diarrhea. Intestinal biopsies show loss of microvilli, microvillus inclusions, and accumulation of subapical vesicles in villus enterocytes.</description>
        <dbReference type="MIM" id="619446"/>
    </disease>
    <text>The disease is caused by variants affecting the gene represented in this entry.</text>
</comment>
<comment type="disease" evidence="4">
    <disease id="DI-06171">
        <name>Diarrhea 12, with microvillus atrophy</name>
        <acronym>DIAR12</acronym>
        <description>An autosomal recessive congenital enteropathy characterized by intractable secretory diarrhea, resulting in severe dehydration and metabolic acidosis. DIAR12 can be diagnosed based on variable loss of brush-border microvilli, microvillus inclusions, and accumulation of subapical vesicles in villus enterocytes.</description>
        <dbReference type="MIM" id="619445"/>
    </disease>
    <text>The disease is caused by variants affecting the gene represented in this entry.</text>
</comment>
<comment type="similarity">
    <text evidence="12">Belongs to the syntaxin family.</text>
</comment>
<reference key="1">
    <citation type="submission" date="1995-08" db="EMBL/GenBank/DDBJ databases">
        <title>Syntaxin and n-Sec1 isoforms in colonic epithelial cells: association of syntaxins 1A and 3 with apical endocytic pathway.</title>
        <authorList>
            <person name="Naren A.P."/>
            <person name="Bradbury N.A."/>
            <person name="Bennett M.K."/>
            <person name="Kirk K.L."/>
        </authorList>
    </citation>
    <scope>NUCLEOTIDE SEQUENCE [MRNA] (ISOFORM A)</scope>
    <source>
        <tissue>Colon</tissue>
    </source>
</reference>
<reference key="2">
    <citation type="journal article" date="1997" name="J. Cell Sci.">
        <title>Human syntaxin 3 is localized apically in human intestinal cells.</title>
        <authorList>
            <person name="Delgrossi M.H."/>
            <person name="Breuza L."/>
            <person name="Mirre C."/>
            <person name="Chavrier P."/>
            <person name="le Bivic A."/>
        </authorList>
    </citation>
    <scope>NUCLEOTIDE SEQUENCE [MRNA] (ISOFORM A)</scope>
    <source>
        <tissue>Duodenum</tissue>
    </source>
</reference>
<reference key="3">
    <citation type="journal article" date="1999" name="J. Leukoc. Biol.">
        <title>Co-expression of several human syntaxin genes in neutrophils and differentiating HL-60 cells: variant isoforms and detection of syntaxin 1.</title>
        <authorList>
            <person name="Martin-Martin B."/>
            <person name="Nabokina S.M."/>
            <person name="Lazo P.A."/>
            <person name="Mollinedo F."/>
        </authorList>
    </citation>
    <scope>NUCLEOTIDE SEQUENCE [MRNA] (ISOFORMS A AND B)</scope>
</reference>
<reference key="4">
    <citation type="journal article" date="2004" name="Nat. Genet.">
        <title>Complete sequencing and characterization of 21,243 full-length human cDNAs.</title>
        <authorList>
            <person name="Ota T."/>
            <person name="Suzuki Y."/>
            <person name="Nishikawa T."/>
            <person name="Otsuki T."/>
            <person name="Sugiyama T."/>
            <person name="Irie R."/>
            <person name="Wakamatsu A."/>
            <person name="Hayashi K."/>
            <person name="Sato H."/>
            <person name="Nagai K."/>
            <person name="Kimura K."/>
            <person name="Makita H."/>
            <person name="Sekine M."/>
            <person name="Obayashi M."/>
            <person name="Nishi T."/>
            <person name="Shibahara T."/>
            <person name="Tanaka T."/>
            <person name="Ishii S."/>
            <person name="Yamamoto J."/>
            <person name="Saito K."/>
            <person name="Kawai Y."/>
            <person name="Isono Y."/>
            <person name="Nakamura Y."/>
            <person name="Nagahari K."/>
            <person name="Murakami K."/>
            <person name="Yasuda T."/>
            <person name="Iwayanagi T."/>
            <person name="Wagatsuma M."/>
            <person name="Shiratori A."/>
            <person name="Sudo H."/>
            <person name="Hosoiri T."/>
            <person name="Kaku Y."/>
            <person name="Kodaira H."/>
            <person name="Kondo H."/>
            <person name="Sugawara M."/>
            <person name="Takahashi M."/>
            <person name="Kanda K."/>
            <person name="Yokoi T."/>
            <person name="Furuya T."/>
            <person name="Kikkawa E."/>
            <person name="Omura Y."/>
            <person name="Abe K."/>
            <person name="Kamihara K."/>
            <person name="Katsuta N."/>
            <person name="Sato K."/>
            <person name="Tanikawa M."/>
            <person name="Yamazaki M."/>
            <person name="Ninomiya K."/>
            <person name="Ishibashi T."/>
            <person name="Yamashita H."/>
            <person name="Murakawa K."/>
            <person name="Fujimori K."/>
            <person name="Tanai H."/>
            <person name="Kimata M."/>
            <person name="Watanabe M."/>
            <person name="Hiraoka S."/>
            <person name="Chiba Y."/>
            <person name="Ishida S."/>
            <person name="Ono Y."/>
            <person name="Takiguchi S."/>
            <person name="Watanabe S."/>
            <person name="Yosida M."/>
            <person name="Hotuta T."/>
            <person name="Kusano J."/>
            <person name="Kanehori K."/>
            <person name="Takahashi-Fujii A."/>
            <person name="Hara H."/>
            <person name="Tanase T.-O."/>
            <person name="Nomura Y."/>
            <person name="Togiya S."/>
            <person name="Komai F."/>
            <person name="Hara R."/>
            <person name="Takeuchi K."/>
            <person name="Arita M."/>
            <person name="Imose N."/>
            <person name="Musashino K."/>
            <person name="Yuuki H."/>
            <person name="Oshima A."/>
            <person name="Sasaki N."/>
            <person name="Aotsuka S."/>
            <person name="Yoshikawa Y."/>
            <person name="Matsunawa H."/>
            <person name="Ichihara T."/>
            <person name="Shiohata N."/>
            <person name="Sano S."/>
            <person name="Moriya S."/>
            <person name="Momiyama H."/>
            <person name="Satoh N."/>
            <person name="Takami S."/>
            <person name="Terashima Y."/>
            <person name="Suzuki O."/>
            <person name="Nakagawa S."/>
            <person name="Senoh A."/>
            <person name="Mizoguchi H."/>
            <person name="Goto Y."/>
            <person name="Shimizu F."/>
            <person name="Wakebe H."/>
            <person name="Hishigaki H."/>
            <person name="Watanabe T."/>
            <person name="Sugiyama A."/>
            <person name="Takemoto M."/>
            <person name="Kawakami B."/>
            <person name="Yamazaki M."/>
            <person name="Watanabe K."/>
            <person name="Kumagai A."/>
            <person name="Itakura S."/>
            <person name="Fukuzumi Y."/>
            <person name="Fujimori Y."/>
            <person name="Komiyama M."/>
            <person name="Tashiro H."/>
            <person name="Tanigami A."/>
            <person name="Fujiwara T."/>
            <person name="Ono T."/>
            <person name="Yamada K."/>
            <person name="Fujii Y."/>
            <person name="Ozaki K."/>
            <person name="Hirao M."/>
            <person name="Ohmori Y."/>
            <person name="Kawabata A."/>
            <person name="Hikiji T."/>
            <person name="Kobatake N."/>
            <person name="Inagaki H."/>
            <person name="Ikema Y."/>
            <person name="Okamoto S."/>
            <person name="Okitani R."/>
            <person name="Kawakami T."/>
            <person name="Noguchi S."/>
            <person name="Itoh T."/>
            <person name="Shigeta K."/>
            <person name="Senba T."/>
            <person name="Matsumura K."/>
            <person name="Nakajima Y."/>
            <person name="Mizuno T."/>
            <person name="Morinaga M."/>
            <person name="Sasaki M."/>
            <person name="Togashi T."/>
            <person name="Oyama M."/>
            <person name="Hata H."/>
            <person name="Watanabe M."/>
            <person name="Komatsu T."/>
            <person name="Mizushima-Sugano J."/>
            <person name="Satoh T."/>
            <person name="Shirai Y."/>
            <person name="Takahashi Y."/>
            <person name="Nakagawa K."/>
            <person name="Okumura K."/>
            <person name="Nagase T."/>
            <person name="Nomura N."/>
            <person name="Kikuchi H."/>
            <person name="Masuho Y."/>
            <person name="Yamashita R."/>
            <person name="Nakai K."/>
            <person name="Yada T."/>
            <person name="Nakamura Y."/>
            <person name="Ohara O."/>
            <person name="Isogai T."/>
            <person name="Sugano S."/>
        </authorList>
    </citation>
    <scope>NUCLEOTIDE SEQUENCE [LARGE SCALE MRNA] (ISOFORM 3)</scope>
    <source>
        <tissue>Brain</tissue>
    </source>
</reference>
<reference key="5">
    <citation type="journal article" date="2006" name="Nature">
        <title>Human chromosome 11 DNA sequence and analysis including novel gene identification.</title>
        <authorList>
            <person name="Taylor T.D."/>
            <person name="Noguchi H."/>
            <person name="Totoki Y."/>
            <person name="Toyoda A."/>
            <person name="Kuroki Y."/>
            <person name="Dewar K."/>
            <person name="Lloyd C."/>
            <person name="Itoh T."/>
            <person name="Takeda T."/>
            <person name="Kim D.-W."/>
            <person name="She X."/>
            <person name="Barlow K.F."/>
            <person name="Bloom T."/>
            <person name="Bruford E."/>
            <person name="Chang J.L."/>
            <person name="Cuomo C.A."/>
            <person name="Eichler E."/>
            <person name="FitzGerald M.G."/>
            <person name="Jaffe D.B."/>
            <person name="LaButti K."/>
            <person name="Nicol R."/>
            <person name="Park H.-S."/>
            <person name="Seaman C."/>
            <person name="Sougnez C."/>
            <person name="Yang X."/>
            <person name="Zimmer A.R."/>
            <person name="Zody M.C."/>
            <person name="Birren B.W."/>
            <person name="Nusbaum C."/>
            <person name="Fujiyama A."/>
            <person name="Hattori M."/>
            <person name="Rogers J."/>
            <person name="Lander E.S."/>
            <person name="Sakaki Y."/>
        </authorList>
    </citation>
    <scope>NUCLEOTIDE SEQUENCE [LARGE SCALE GENOMIC DNA]</scope>
</reference>
<reference key="6">
    <citation type="submission" date="2005-07" db="EMBL/GenBank/DDBJ databases">
        <authorList>
            <person name="Mural R.J."/>
            <person name="Istrail S."/>
            <person name="Sutton G."/>
            <person name="Florea L."/>
            <person name="Halpern A.L."/>
            <person name="Mobarry C.M."/>
            <person name="Lippert R."/>
            <person name="Walenz B."/>
            <person name="Shatkay H."/>
            <person name="Dew I."/>
            <person name="Miller J.R."/>
            <person name="Flanigan M.J."/>
            <person name="Edwards N.J."/>
            <person name="Bolanos R."/>
            <person name="Fasulo D."/>
            <person name="Halldorsson B.V."/>
            <person name="Hannenhalli S."/>
            <person name="Turner R."/>
            <person name="Yooseph S."/>
            <person name="Lu F."/>
            <person name="Nusskern D.R."/>
            <person name="Shue B.C."/>
            <person name="Zheng X.H."/>
            <person name="Zhong F."/>
            <person name="Delcher A.L."/>
            <person name="Huson D.H."/>
            <person name="Kravitz S.A."/>
            <person name="Mouchard L."/>
            <person name="Reinert K."/>
            <person name="Remington K.A."/>
            <person name="Clark A.G."/>
            <person name="Waterman M.S."/>
            <person name="Eichler E.E."/>
            <person name="Adams M.D."/>
            <person name="Hunkapiller M.W."/>
            <person name="Myers E.W."/>
            <person name="Venter J.C."/>
        </authorList>
    </citation>
    <scope>NUCLEOTIDE SEQUENCE [LARGE SCALE GENOMIC DNA]</scope>
</reference>
<reference key="7">
    <citation type="journal article" date="2004" name="Genome Res.">
        <title>The status, quality, and expansion of the NIH full-length cDNA project: the Mammalian Gene Collection (MGC).</title>
        <authorList>
            <consortium name="The MGC Project Team"/>
        </authorList>
    </citation>
    <scope>NUCLEOTIDE SEQUENCE [LARGE SCALE MRNA] (ISOFORM A)</scope>
    <source>
        <tissue>Muscle</tissue>
    </source>
</reference>
<reference key="8">
    <citation type="journal article" date="2011" name="BMC Syst. Biol.">
        <title>Initial characterization of the human central proteome.</title>
        <authorList>
            <person name="Burkard T.R."/>
            <person name="Planyavsky M."/>
            <person name="Kaupe I."/>
            <person name="Breitwieser F.P."/>
            <person name="Buerckstuemmer T."/>
            <person name="Bennett K.L."/>
            <person name="Superti-Furga G."/>
            <person name="Colinge J."/>
        </authorList>
    </citation>
    <scope>IDENTIFICATION BY MASS SPECTROMETRY [LARGE SCALE ANALYSIS]</scope>
</reference>
<reference key="9">
    <citation type="journal article" date="2014" name="Gastroenterology">
        <title>Loss of syntaxin 3 causes variant microvillus inclusion disease.</title>
        <authorList>
            <person name="Wiegerinck C.L."/>
            <person name="Janecke A.R."/>
            <person name="Schneeberger K."/>
            <person name="Vogel G.F."/>
            <person name="van Haaften-Visser D.Y."/>
            <person name="Escher J.C."/>
            <person name="Adam R."/>
            <person name="Thoeni C.E."/>
            <person name="Pfaller K."/>
            <person name="Jordan A.J."/>
            <person name="Weis C.A."/>
            <person name="Nijman I.J."/>
            <person name="Monroe G.R."/>
            <person name="van Hasselt P.M."/>
            <person name="Cutz E."/>
            <person name="Klumperman J."/>
            <person name="Clevers H."/>
            <person name="Nieuwenhuis E.E."/>
            <person name="Houwen R.H."/>
            <person name="van Haaften G."/>
            <person name="Hess M.W."/>
            <person name="Huber L.A."/>
            <person name="Stapelbroek J.M."/>
            <person name="Mueller T."/>
            <person name="Middendorp S."/>
        </authorList>
    </citation>
    <scope>INVOLVEMENT IN RDMVID</scope>
    <scope>INVOLVEMENT IN DIAR12</scope>
    <scope>VARIANT DIAR12 247-ARG--ASN-289 DEL</scope>
    <scope>CHARACTERIZATIONOF VARIANT DIAR12 247-ARG--ASN-289 DEL</scope>
    <scope>FUNCTION</scope>
    <scope>SUBCELLULAR LOCATION</scope>
    <scope>TISSUE SPECIFICITY</scope>
</reference>
<reference key="10">
    <citation type="journal article" date="2018" name="J. Biol. Chem.">
        <title>Soluble syntaxin 3 functions as a transcriptional regulator.</title>
        <authorList>
            <person name="Giovannone A.J."/>
            <person name="Winterstein C."/>
            <person name="Bhattaram P."/>
            <person name="Reales E."/>
            <person name="Low S.H."/>
            <person name="Baggs J.E."/>
            <person name="Xu M."/>
            <person name="Lalli M.A."/>
            <person name="Hogenesch J.B."/>
            <person name="Weimbs T."/>
        </authorList>
    </citation>
    <scope>ALTERNATIVE SPLICING (ISOFORM 3)</scope>
    <scope>FUNCTION (ISOFORM 3)</scope>
    <scope>SUBCELLULAR LOCATION (ISOFORM 3)</scope>
    <scope>INTERACTION WITH IPO5A (ISOFORM 3)</scope>
    <scope>TISSUE SPECIFICITY (ISOFORM 3)</scope>
</reference>
<reference key="11">
    <citation type="journal article" date="2015" name="Clin. Genet.">
        <title>Autosomal recessive congenital cataract, intellectual disability phenotype linked to STX3 in a consanguineous Tunisian family.</title>
        <authorList>
            <person name="Chograni M."/>
            <person name="Alkuraya F.S."/>
            <person name="Ourteni I."/>
            <person name="Maazoul F."/>
            <person name="Lariani I."/>
            <person name="Chaabouni H.B."/>
        </authorList>
    </citation>
    <scope>VARIANT GLY-41</scope>
</reference>
<reference key="12">
    <citation type="journal article" date="2017" name="Case Rep. Gastroenterol.">
        <title>Microvillus Inclusion Disease Variant in an Infant with Intractable Diarrhea.</title>
        <authorList>
            <person name="Alsaleem B.M.R."/>
            <person name="Ahmed A.B.M."/>
            <person name="Fageeh M.A."/>
        </authorList>
    </citation>
    <scope>VARIANT RDMVID 247-ARG--ASN-289 DEL</scope>
</reference>
<reference key="13">
    <citation type="journal article" date="2021" name="Hum. Genet.">
        <title>Pathogenic STX3 variants affecting the retinal and intestinal transcripts cause an early-onset severe retinal dystrophy in microvillus inclusion disease subjects.</title>
        <authorList>
            <person name="Janecke A.R."/>
            <person name="Liu X."/>
            <person name="Adam R."/>
            <person name="Punuru S."/>
            <person name="Viestenz A."/>
            <person name="Strauss V."/>
            <person name="Laass M."/>
            <person name="Sanchez E."/>
            <person name="Adachi R."/>
            <person name="Schatz M.P."/>
            <person name="Saboo U.S."/>
            <person name="Mittal N."/>
            <person name="Rohrschneider K."/>
            <person name="Escher J."/>
            <person name="Ganesh A."/>
            <person name="Al Zuhaibi S."/>
            <person name="Al Murshedi F."/>
            <person name="AlSaleem B."/>
            <person name="Alfadhel M."/>
            <person name="Al Sinani S."/>
            <person name="Alkuraya F.S."/>
            <person name="Huber L.A."/>
            <person name="Mueller T."/>
            <person name="Heidelberger R."/>
            <person name="Janz R."/>
        </authorList>
    </citation>
    <scope>VARIANT RDMVID 247-ARG--ASN-289 DEL</scope>
    <scope>FUNCTION (ISOFORM B)</scope>
    <scope>TISSUE SPECIFICITY (ISOFORM B)</scope>
</reference>
<reference key="14">
    <citation type="journal article" date="2015" name="Proteomics">
        <title>N-terminome analysis of the human mitochondrial proteome.</title>
        <authorList>
            <person name="Vaca Jacome A.S."/>
            <person name="Rabilloud T."/>
            <person name="Schaeffer-Reiss C."/>
            <person name="Rompais M."/>
            <person name="Ayoub D."/>
            <person name="Lane L."/>
            <person name="Bairoch A."/>
            <person name="Van Dorsselaer A."/>
            <person name="Carapito C."/>
        </authorList>
    </citation>
    <scope>IDENTIFICATION BY MASS SPECTROMETRY [LARGE SCALE ANALYSIS]</scope>
</reference>
<gene>
    <name type="primary">STX3</name>
    <name type="synonym">STX3A</name>
</gene>
<organism>
    <name type="scientific">Homo sapiens</name>
    <name type="common">Human</name>
    <dbReference type="NCBI Taxonomy" id="9606"/>
    <lineage>
        <taxon>Eukaryota</taxon>
        <taxon>Metazoa</taxon>
        <taxon>Chordata</taxon>
        <taxon>Craniata</taxon>
        <taxon>Vertebrata</taxon>
        <taxon>Euteleostomi</taxon>
        <taxon>Mammalia</taxon>
        <taxon>Eutheria</taxon>
        <taxon>Euarchontoglires</taxon>
        <taxon>Primates</taxon>
        <taxon>Haplorrhini</taxon>
        <taxon>Catarrhini</taxon>
        <taxon>Hominidae</taxon>
        <taxon>Homo</taxon>
    </lineage>
</organism>
<protein>
    <recommendedName>
        <fullName>Syntaxin-3</fullName>
    </recommendedName>
</protein>
<evidence type="ECO:0000250" key="1">
    <source>
        <dbReference type="UniProtKB" id="Q64704"/>
    </source>
</evidence>
<evidence type="ECO:0000255" key="2"/>
<evidence type="ECO:0000255" key="3">
    <source>
        <dbReference type="PROSITE-ProRule" id="PRU00202"/>
    </source>
</evidence>
<evidence type="ECO:0000269" key="4">
    <source>
    </source>
</evidence>
<evidence type="ECO:0000269" key="5">
    <source>
    </source>
</evidence>
<evidence type="ECO:0000269" key="6">
    <source>
    </source>
</evidence>
<evidence type="ECO:0000269" key="7">
    <source>
    </source>
</evidence>
<evidence type="ECO:0000269" key="8">
    <source>
    </source>
</evidence>
<evidence type="ECO:0000303" key="9">
    <source>
    </source>
</evidence>
<evidence type="ECO:0000303" key="10">
    <source>
    </source>
</evidence>
<evidence type="ECO:0000303" key="11">
    <source>
    </source>
</evidence>
<evidence type="ECO:0000305" key="12"/>
<feature type="chain" id="PRO_0000210199" description="Syntaxin-3">
    <location>
        <begin position="1"/>
        <end position="289"/>
    </location>
</feature>
<feature type="topological domain" description="Cytoplasmic" evidence="2">
    <location>
        <begin position="1"/>
        <end position="263"/>
    </location>
</feature>
<feature type="transmembrane region" description="Helical; Anchor for type IV membrane protein" evidence="2">
    <location>
        <begin position="264"/>
        <end position="284"/>
    </location>
</feature>
<feature type="topological domain" description="Extracellular" evidence="2">
    <location>
        <begin position="285"/>
        <end position="289"/>
    </location>
</feature>
<feature type="domain" description="t-SNARE coiled-coil homology" evidence="3">
    <location>
        <begin position="191"/>
        <end position="253"/>
    </location>
</feature>
<feature type="coiled-coil region" evidence="2">
    <location>
        <begin position="32"/>
        <end position="111"/>
    </location>
</feature>
<feature type="splice variant" id="VSP_006340" description="In isoform B." evidence="9">
    <location>
        <begin position="226"/>
        <end position="262"/>
    </location>
</feature>
<feature type="splice variant" id="VSP_043187" description="In isoform 3." evidence="10 11">
    <original>IIIVLVVVLLGILALIIGLSVGLN</original>
    <variation>SLQTGVATLVFR</variation>
    <location>
        <begin position="266"/>
        <end position="289"/>
    </location>
</feature>
<feature type="sequence variant" id="VAR_086135" description="Found in a patient with congenital cataract and developmental delay; uncertain significance; dbSNP:rs797045154." evidence="5">
    <original>E</original>
    <variation>G</variation>
    <location>
        <position position="41"/>
    </location>
</feature>
<feature type="sequence variant" id="VAR_028189" description="In dbSNP:rs12282741.">
    <original>E</original>
    <variation>D</variation>
    <location>
        <position position="83"/>
    </location>
</feature>
<feature type="sequence variant" id="VAR_086136" description="In DIAR12; loss of expression." evidence="4 8">
    <location>
        <begin position="247"/>
        <end position="289"/>
    </location>
</feature>
<feature type="sequence variant" id="VAR_052246" description="In dbSNP:rs34563654.">
    <original>G</original>
    <variation>S</variation>
    <location>
        <position position="276"/>
    </location>
</feature>
<feature type="sequence variant" id="VAR_052247" description="In dbSNP:rs34753750.">
    <original>S</original>
    <variation>P</variation>
    <location>
        <position position="285"/>
    </location>
</feature>
<feature type="sequence conflict" description="In Ref. 2." evidence="12" ref="2">
    <location>
        <begin position="2"/>
        <end position="11"/>
    </location>
</feature>
<feature type="sequence conflict" description="In Ref. 2; CAA62209." evidence="12" ref="2">
    <original>T</original>
    <variation>S</variation>
    <location>
        <position position="81"/>
    </location>
</feature>
<feature type="sequence conflict" description="In Ref. 1; AAA75303." evidence="12" ref="1">
    <original>QL</original>
    <variation>HV</variation>
    <location>
        <begin position="152"/>
        <end position="153"/>
    </location>
</feature>
<feature type="sequence conflict" description="In Ref. 1 and 2." evidence="12" ref="1 2">
    <original>T</original>
    <variation>S</variation>
    <location>
        <position position="250"/>
    </location>
</feature>
<dbReference type="EMBL" id="U32315">
    <property type="protein sequence ID" value="AAA75303.1"/>
    <property type="molecule type" value="mRNA"/>
</dbReference>
<dbReference type="EMBL" id="X90581">
    <property type="protein sequence ID" value="CAA62209.1"/>
    <property type="molecule type" value="mRNA"/>
</dbReference>
<dbReference type="EMBL" id="AJ002076">
    <property type="protein sequence ID" value="CAA05175.1"/>
    <property type="molecule type" value="mRNA"/>
</dbReference>
<dbReference type="EMBL" id="AJ002077">
    <property type="protein sequence ID" value="CAA05176.1"/>
    <property type="molecule type" value="mRNA"/>
</dbReference>
<dbReference type="EMBL" id="AK297419">
    <property type="protein sequence ID" value="BAG59852.1"/>
    <property type="molecule type" value="mRNA"/>
</dbReference>
<dbReference type="EMBL" id="AP000640">
    <property type="status" value="NOT_ANNOTATED_CDS"/>
    <property type="molecule type" value="Genomic_DNA"/>
</dbReference>
<dbReference type="EMBL" id="CH471076">
    <property type="protein sequence ID" value="EAW73854.1"/>
    <property type="molecule type" value="Genomic_DNA"/>
</dbReference>
<dbReference type="EMBL" id="BC007405">
    <property type="protein sequence ID" value="AAH07405.1"/>
    <property type="molecule type" value="mRNA"/>
</dbReference>
<dbReference type="EMBL" id="BC007429">
    <property type="protein sequence ID" value="AAH07429.1"/>
    <property type="molecule type" value="mRNA"/>
</dbReference>
<dbReference type="CCDS" id="CCDS53637.1">
    <molecule id="Q13277-3"/>
</dbReference>
<dbReference type="CCDS" id="CCDS7975.1">
    <molecule id="Q13277-1"/>
</dbReference>
<dbReference type="PIR" id="G01969">
    <property type="entry name" value="G01969"/>
</dbReference>
<dbReference type="RefSeq" id="NP_001171511.1">
    <molecule id="Q13277-3"/>
    <property type="nucleotide sequence ID" value="NM_001178040.2"/>
</dbReference>
<dbReference type="RefSeq" id="NP_004168.1">
    <molecule id="Q13277-1"/>
    <property type="nucleotide sequence ID" value="NM_004177.5"/>
</dbReference>
<dbReference type="RefSeq" id="XP_005274252.1">
    <molecule id="Q13277-1"/>
    <property type="nucleotide sequence ID" value="XM_005274195.5"/>
</dbReference>
<dbReference type="RefSeq" id="XP_005274257.1">
    <property type="nucleotide sequence ID" value="XM_005274200.3"/>
</dbReference>
<dbReference type="RefSeq" id="XP_047283456.1">
    <molecule id="Q13277-1"/>
    <property type="nucleotide sequence ID" value="XM_047427500.1"/>
</dbReference>
<dbReference type="RefSeq" id="XP_047283458.1">
    <molecule id="Q13277-2"/>
    <property type="nucleotide sequence ID" value="XM_047427502.1"/>
</dbReference>
<dbReference type="RefSeq" id="XP_047283459.1">
    <molecule id="Q13277-2"/>
    <property type="nucleotide sequence ID" value="XM_047427503.1"/>
</dbReference>
<dbReference type="RefSeq" id="XP_054225737.1">
    <molecule id="Q13277-1"/>
    <property type="nucleotide sequence ID" value="XM_054369762.1"/>
</dbReference>
<dbReference type="RefSeq" id="XP_054225738.1">
    <molecule id="Q13277-1"/>
    <property type="nucleotide sequence ID" value="XM_054369763.1"/>
</dbReference>
<dbReference type="RefSeq" id="XP_054225740.1">
    <molecule id="Q13277-2"/>
    <property type="nucleotide sequence ID" value="XM_054369765.1"/>
</dbReference>
<dbReference type="RefSeq" id="XP_054225741.1">
    <molecule id="Q13277-2"/>
    <property type="nucleotide sequence ID" value="XM_054369766.1"/>
</dbReference>
<dbReference type="SMR" id="Q13277"/>
<dbReference type="BioGRID" id="112678">
    <property type="interactions" value="161"/>
</dbReference>
<dbReference type="FunCoup" id="Q13277">
    <property type="interactions" value="1093"/>
</dbReference>
<dbReference type="IntAct" id="Q13277">
    <property type="interactions" value="124"/>
</dbReference>
<dbReference type="MINT" id="Q13277"/>
<dbReference type="STRING" id="9606.ENSP00000338562"/>
<dbReference type="TCDB" id="8.A.91.1.6">
    <property type="family name" value="the syntaxin (syntaxin) family"/>
</dbReference>
<dbReference type="iPTMnet" id="Q13277"/>
<dbReference type="PhosphoSitePlus" id="Q13277"/>
<dbReference type="SwissPalm" id="Q13277"/>
<dbReference type="BioMuta" id="STX3"/>
<dbReference type="DMDM" id="116242806"/>
<dbReference type="jPOST" id="Q13277"/>
<dbReference type="MassIVE" id="Q13277"/>
<dbReference type="PaxDb" id="9606-ENSP00000338562"/>
<dbReference type="PeptideAtlas" id="Q13277"/>
<dbReference type="ProteomicsDB" id="59271">
    <molecule id="Q13277-1"/>
</dbReference>
<dbReference type="ProteomicsDB" id="59272">
    <molecule id="Q13277-2"/>
</dbReference>
<dbReference type="ProteomicsDB" id="59273">
    <molecule id="Q13277-3"/>
</dbReference>
<dbReference type="Pumba" id="Q13277"/>
<dbReference type="Antibodypedia" id="724">
    <property type="antibodies" value="158 antibodies from 31 providers"/>
</dbReference>
<dbReference type="DNASU" id="6809"/>
<dbReference type="Ensembl" id="ENST00000337979.9">
    <molecule id="Q13277-1"/>
    <property type="protein sequence ID" value="ENSP00000338562.4"/>
    <property type="gene ID" value="ENSG00000166900.17"/>
</dbReference>
<dbReference type="Ensembl" id="ENST00000529177.5">
    <molecule id="Q13277-3"/>
    <property type="protein sequence ID" value="ENSP00000433248.1"/>
    <property type="gene ID" value="ENSG00000166900.17"/>
</dbReference>
<dbReference type="GeneID" id="6809"/>
<dbReference type="KEGG" id="hsa:6809"/>
<dbReference type="MANE-Select" id="ENST00000337979.9">
    <property type="protein sequence ID" value="ENSP00000338562.4"/>
    <property type="RefSeq nucleotide sequence ID" value="NM_004177.5"/>
    <property type="RefSeq protein sequence ID" value="NP_004168.1"/>
</dbReference>
<dbReference type="UCSC" id="uc010rkx.3">
    <molecule id="Q13277-1"/>
    <property type="organism name" value="human"/>
</dbReference>
<dbReference type="AGR" id="HGNC:11438"/>
<dbReference type="CTD" id="6809"/>
<dbReference type="DisGeNET" id="6809"/>
<dbReference type="GeneCards" id="STX3"/>
<dbReference type="HGNC" id="HGNC:11438">
    <property type="gene designation" value="STX3"/>
</dbReference>
<dbReference type="HPA" id="ENSG00000166900">
    <property type="expression patterns" value="Tissue enriched (retina)"/>
</dbReference>
<dbReference type="MalaCards" id="STX3"/>
<dbReference type="MIM" id="600876">
    <property type="type" value="gene"/>
</dbReference>
<dbReference type="MIM" id="619445">
    <property type="type" value="phenotype"/>
</dbReference>
<dbReference type="MIM" id="619446">
    <property type="type" value="phenotype"/>
</dbReference>
<dbReference type="neXtProt" id="NX_Q13277"/>
<dbReference type="OpenTargets" id="ENSG00000166900"/>
<dbReference type="Orphanet" id="2290">
    <property type="disease" value="Microvillus inclusion disease"/>
</dbReference>
<dbReference type="PharmGKB" id="PA36235"/>
<dbReference type="VEuPathDB" id="HostDB:ENSG00000166900"/>
<dbReference type="eggNOG" id="KOG0810">
    <property type="taxonomic scope" value="Eukaryota"/>
</dbReference>
<dbReference type="GeneTree" id="ENSGT01030000234627"/>
<dbReference type="InParanoid" id="Q13277"/>
<dbReference type="OrthoDB" id="10255013at2759"/>
<dbReference type="PAN-GO" id="Q13277">
    <property type="GO annotations" value="13 GO annotations based on evolutionary models"/>
</dbReference>
<dbReference type="PhylomeDB" id="Q13277"/>
<dbReference type="TreeFam" id="TF313763"/>
<dbReference type="PathwayCommons" id="Q13277"/>
<dbReference type="Reactome" id="R-HSA-449836">
    <property type="pathway name" value="Other interleukin signaling"/>
</dbReference>
<dbReference type="SignaLink" id="Q13277"/>
<dbReference type="BioGRID-ORCS" id="6809">
    <property type="hits" value="14 hits in 1155 CRISPR screens"/>
</dbReference>
<dbReference type="ChiTaRS" id="STX3">
    <property type="organism name" value="human"/>
</dbReference>
<dbReference type="GeneWiki" id="Syntaxin_3"/>
<dbReference type="GenomeRNAi" id="6809"/>
<dbReference type="Pharos" id="Q13277">
    <property type="development level" value="Tbio"/>
</dbReference>
<dbReference type="PRO" id="PR:Q13277"/>
<dbReference type="Proteomes" id="UP000005640">
    <property type="component" value="Chromosome 11"/>
</dbReference>
<dbReference type="RNAct" id="Q13277">
    <property type="molecule type" value="protein"/>
</dbReference>
<dbReference type="Bgee" id="ENSG00000166900">
    <property type="expression patterns" value="Expressed in rectum and 179 other cell types or tissues"/>
</dbReference>
<dbReference type="ExpressionAtlas" id="Q13277">
    <property type="expression patterns" value="baseline and differential"/>
</dbReference>
<dbReference type="GO" id="GO:0016324">
    <property type="term" value="C:apical plasma membrane"/>
    <property type="evidence" value="ECO:0000314"/>
    <property type="project" value="HGNC-UCL"/>
</dbReference>
<dbReference type="GO" id="GO:0042582">
    <property type="term" value="C:azurophil granule"/>
    <property type="evidence" value="ECO:0000314"/>
    <property type="project" value="UniProtKB"/>
</dbReference>
<dbReference type="GO" id="GO:0005911">
    <property type="term" value="C:cell-cell junction"/>
    <property type="evidence" value="ECO:0000314"/>
    <property type="project" value="UniProtKB"/>
</dbReference>
<dbReference type="GO" id="GO:0030425">
    <property type="term" value="C:dendrite"/>
    <property type="evidence" value="ECO:0007669"/>
    <property type="project" value="Ensembl"/>
</dbReference>
<dbReference type="GO" id="GO:0012505">
    <property type="term" value="C:endomembrane system"/>
    <property type="evidence" value="ECO:0000318"/>
    <property type="project" value="GO_Central"/>
</dbReference>
<dbReference type="GO" id="GO:0070062">
    <property type="term" value="C:extracellular exosome"/>
    <property type="evidence" value="ECO:0007005"/>
    <property type="project" value="UniProtKB"/>
</dbReference>
<dbReference type="GO" id="GO:0098978">
    <property type="term" value="C:glutamatergic synapse"/>
    <property type="evidence" value="ECO:0007669"/>
    <property type="project" value="Ensembl"/>
</dbReference>
<dbReference type="GO" id="GO:0030426">
    <property type="term" value="C:growth cone"/>
    <property type="evidence" value="ECO:0000250"/>
    <property type="project" value="HGNC-UCL"/>
</dbReference>
<dbReference type="GO" id="GO:0030027">
    <property type="term" value="C:lamellipodium"/>
    <property type="evidence" value="ECO:0000314"/>
    <property type="project" value="UniProtKB"/>
</dbReference>
<dbReference type="GO" id="GO:0042470">
    <property type="term" value="C:melanosome"/>
    <property type="evidence" value="ECO:0007669"/>
    <property type="project" value="Ensembl"/>
</dbReference>
<dbReference type="GO" id="GO:0043005">
    <property type="term" value="C:neuron projection"/>
    <property type="evidence" value="ECO:0000250"/>
    <property type="project" value="HGNC-UCL"/>
</dbReference>
<dbReference type="GO" id="GO:0005634">
    <property type="term" value="C:nucleus"/>
    <property type="evidence" value="ECO:0007669"/>
    <property type="project" value="UniProtKB-SubCell"/>
</dbReference>
<dbReference type="GO" id="GO:0001917">
    <property type="term" value="C:photoreceptor inner segment"/>
    <property type="evidence" value="ECO:0000250"/>
    <property type="project" value="UniProtKB"/>
</dbReference>
<dbReference type="GO" id="GO:0001750">
    <property type="term" value="C:photoreceptor outer segment"/>
    <property type="evidence" value="ECO:0000250"/>
    <property type="project" value="UniProtKB"/>
</dbReference>
<dbReference type="GO" id="GO:0005886">
    <property type="term" value="C:plasma membrane"/>
    <property type="evidence" value="ECO:0000314"/>
    <property type="project" value="UniProtKB"/>
</dbReference>
<dbReference type="GO" id="GO:0098794">
    <property type="term" value="C:postsynapse"/>
    <property type="evidence" value="ECO:0000318"/>
    <property type="project" value="GO_Central"/>
</dbReference>
<dbReference type="GO" id="GO:0098793">
    <property type="term" value="C:presynapse"/>
    <property type="evidence" value="ECO:0000314"/>
    <property type="project" value="SynGO"/>
</dbReference>
<dbReference type="GO" id="GO:0098685">
    <property type="term" value="C:Schaffer collateral - CA1 synapse"/>
    <property type="evidence" value="ECO:0007669"/>
    <property type="project" value="Ensembl"/>
</dbReference>
<dbReference type="GO" id="GO:0031201">
    <property type="term" value="C:SNARE complex"/>
    <property type="evidence" value="ECO:0000250"/>
    <property type="project" value="HGNC-UCL"/>
</dbReference>
<dbReference type="GO" id="GO:0042581">
    <property type="term" value="C:specific granule"/>
    <property type="evidence" value="ECO:0000314"/>
    <property type="project" value="UniProtKB"/>
</dbReference>
<dbReference type="GO" id="GO:0005773">
    <property type="term" value="C:vacuole"/>
    <property type="evidence" value="ECO:0000304"/>
    <property type="project" value="HGNC-UCL"/>
</dbReference>
<dbReference type="GO" id="GO:0042589">
    <property type="term" value="C:zymogen granule membrane"/>
    <property type="evidence" value="ECO:0007669"/>
    <property type="project" value="Ensembl"/>
</dbReference>
<dbReference type="GO" id="GO:0050544">
    <property type="term" value="F:arachidonate binding"/>
    <property type="evidence" value="ECO:0000250"/>
    <property type="project" value="HGNC-UCL"/>
</dbReference>
<dbReference type="GO" id="GO:0005484">
    <property type="term" value="F:SNAP receptor activity"/>
    <property type="evidence" value="ECO:0000318"/>
    <property type="project" value="GO_Central"/>
</dbReference>
<dbReference type="GO" id="GO:0000149">
    <property type="term" value="F:SNARE binding"/>
    <property type="evidence" value="ECO:0000318"/>
    <property type="project" value="GO_Central"/>
</dbReference>
<dbReference type="GO" id="GO:0098967">
    <property type="term" value="P:exocytic insertion of neurotransmitter receptor to postsynaptic membrane"/>
    <property type="evidence" value="ECO:0000318"/>
    <property type="project" value="GO_Central"/>
</dbReference>
<dbReference type="GO" id="GO:0006886">
    <property type="term" value="P:intracellular protein transport"/>
    <property type="evidence" value="ECO:0000318"/>
    <property type="project" value="GO_Central"/>
</dbReference>
<dbReference type="GO" id="GO:0060291">
    <property type="term" value="P:long-term synaptic potentiation"/>
    <property type="evidence" value="ECO:0007669"/>
    <property type="project" value="Ensembl"/>
</dbReference>
<dbReference type="GO" id="GO:0031175">
    <property type="term" value="P:neuron projection development"/>
    <property type="evidence" value="ECO:0000250"/>
    <property type="project" value="HGNC-UCL"/>
</dbReference>
<dbReference type="GO" id="GO:0006836">
    <property type="term" value="P:neurotransmitter transport"/>
    <property type="evidence" value="ECO:0007669"/>
    <property type="project" value="UniProtKB-KW"/>
</dbReference>
<dbReference type="GO" id="GO:0090174">
    <property type="term" value="P:organelle membrane fusion"/>
    <property type="evidence" value="ECO:0000315"/>
    <property type="project" value="UniProtKB"/>
</dbReference>
<dbReference type="GO" id="GO:0045785">
    <property type="term" value="P:positive regulation of cell adhesion"/>
    <property type="evidence" value="ECO:0000315"/>
    <property type="project" value="UniProtKB"/>
</dbReference>
<dbReference type="GO" id="GO:0008284">
    <property type="term" value="P:positive regulation of cell population proliferation"/>
    <property type="evidence" value="ECO:0000315"/>
    <property type="project" value="UniProtKB"/>
</dbReference>
<dbReference type="GO" id="GO:0050921">
    <property type="term" value="P:positive regulation of chemotaxis"/>
    <property type="evidence" value="ECO:0000315"/>
    <property type="project" value="UniProtKB"/>
</dbReference>
<dbReference type="GO" id="GO:2000010">
    <property type="term" value="P:positive regulation of protein localization to cell surface"/>
    <property type="evidence" value="ECO:0000315"/>
    <property type="project" value="UniProtKB"/>
</dbReference>
<dbReference type="GO" id="GO:1903078">
    <property type="term" value="P:positive regulation of protein localization to plasma membrane"/>
    <property type="evidence" value="ECO:0000315"/>
    <property type="project" value="UniProtKB"/>
</dbReference>
<dbReference type="GO" id="GO:0010468">
    <property type="term" value="P:regulation of gene expression"/>
    <property type="evidence" value="ECO:0000314"/>
    <property type="project" value="UniProtKB"/>
</dbReference>
<dbReference type="GO" id="GO:0048278">
    <property type="term" value="P:vesicle docking"/>
    <property type="evidence" value="ECO:0000318"/>
    <property type="project" value="GO_Central"/>
</dbReference>
<dbReference type="GO" id="GO:0006906">
    <property type="term" value="P:vesicle fusion"/>
    <property type="evidence" value="ECO:0000318"/>
    <property type="project" value="GO_Central"/>
</dbReference>
<dbReference type="GO" id="GO:0099003">
    <property type="term" value="P:vesicle-mediated transport in synapse"/>
    <property type="evidence" value="ECO:0007669"/>
    <property type="project" value="Ensembl"/>
</dbReference>
<dbReference type="CDD" id="cd15881">
    <property type="entry name" value="SNARE_syntaxin3"/>
    <property type="match status" value="1"/>
</dbReference>
<dbReference type="CDD" id="cd00179">
    <property type="entry name" value="SynN"/>
    <property type="match status" value="1"/>
</dbReference>
<dbReference type="FunFam" id="1.20.5.110:FF:000023">
    <property type="entry name" value="Syntaxin 3"/>
    <property type="match status" value="1"/>
</dbReference>
<dbReference type="FunFam" id="1.20.58.70:FF:000001">
    <property type="entry name" value="Syntaxin 3"/>
    <property type="match status" value="1"/>
</dbReference>
<dbReference type="Gene3D" id="1.20.5.110">
    <property type="match status" value="1"/>
</dbReference>
<dbReference type="Gene3D" id="1.20.58.70">
    <property type="match status" value="1"/>
</dbReference>
<dbReference type="InterPro" id="IPR010989">
    <property type="entry name" value="SNARE"/>
</dbReference>
<dbReference type="InterPro" id="IPR031186">
    <property type="entry name" value="STX3_SNARE"/>
</dbReference>
<dbReference type="InterPro" id="IPR045242">
    <property type="entry name" value="Syntaxin"/>
</dbReference>
<dbReference type="InterPro" id="IPR006012">
    <property type="entry name" value="Syntaxin/epimorphin_CS"/>
</dbReference>
<dbReference type="InterPro" id="IPR006011">
    <property type="entry name" value="Syntaxin_N"/>
</dbReference>
<dbReference type="InterPro" id="IPR000727">
    <property type="entry name" value="T_SNARE_dom"/>
</dbReference>
<dbReference type="PANTHER" id="PTHR19957">
    <property type="entry name" value="SYNTAXIN"/>
    <property type="match status" value="1"/>
</dbReference>
<dbReference type="PANTHER" id="PTHR19957:SF34">
    <property type="entry name" value="SYNTAXIN-3"/>
    <property type="match status" value="1"/>
</dbReference>
<dbReference type="Pfam" id="PF05739">
    <property type="entry name" value="SNARE"/>
    <property type="match status" value="1"/>
</dbReference>
<dbReference type="Pfam" id="PF00804">
    <property type="entry name" value="Syntaxin"/>
    <property type="match status" value="1"/>
</dbReference>
<dbReference type="SMART" id="SM00503">
    <property type="entry name" value="SynN"/>
    <property type="match status" value="1"/>
</dbReference>
<dbReference type="SMART" id="SM00397">
    <property type="entry name" value="t_SNARE"/>
    <property type="match status" value="1"/>
</dbReference>
<dbReference type="SUPFAM" id="SSF47661">
    <property type="entry name" value="t-snare proteins"/>
    <property type="match status" value="1"/>
</dbReference>
<dbReference type="PROSITE" id="PS00914">
    <property type="entry name" value="SYNTAXIN"/>
    <property type="match status" value="1"/>
</dbReference>
<dbReference type="PROSITE" id="PS50192">
    <property type="entry name" value="T_SNARE"/>
    <property type="match status" value="1"/>
</dbReference>